<reference key="1">
    <citation type="journal article" date="2009" name="J. Bacteriol.">
        <title>The genome of Burkholderia cenocepacia J2315, an epidemic pathogen of cystic fibrosis patients.</title>
        <authorList>
            <person name="Holden M.T."/>
            <person name="Seth-Smith H.M."/>
            <person name="Crossman L.C."/>
            <person name="Sebaihia M."/>
            <person name="Bentley S.D."/>
            <person name="Cerdeno-Tarraga A.M."/>
            <person name="Thomson N.R."/>
            <person name="Bason N."/>
            <person name="Quail M.A."/>
            <person name="Sharp S."/>
            <person name="Cherevach I."/>
            <person name="Churcher C."/>
            <person name="Goodhead I."/>
            <person name="Hauser H."/>
            <person name="Holroyd N."/>
            <person name="Mungall K."/>
            <person name="Scott P."/>
            <person name="Walker D."/>
            <person name="White B."/>
            <person name="Rose H."/>
            <person name="Iversen P."/>
            <person name="Mil-Homens D."/>
            <person name="Rocha E.P."/>
            <person name="Fialho A.M."/>
            <person name="Baldwin A."/>
            <person name="Dowson C."/>
            <person name="Barrell B.G."/>
            <person name="Govan J.R."/>
            <person name="Vandamme P."/>
            <person name="Hart C.A."/>
            <person name="Mahenthiralingam E."/>
            <person name="Parkhill J."/>
        </authorList>
    </citation>
    <scope>NUCLEOTIDE SEQUENCE [LARGE SCALE GENOMIC DNA]</scope>
    <source>
        <strain>ATCC BAA-245 / DSM 16553 / LMG 16656 / NCTC 13227 / J2315 / CF5610</strain>
    </source>
</reference>
<feature type="chain" id="PRO_1000099789" description="Anthranilate phosphoribosyltransferase">
    <location>
        <begin position="1"/>
        <end position="343"/>
    </location>
</feature>
<feature type="binding site" evidence="1">
    <location>
        <position position="84"/>
    </location>
    <ligand>
        <name>5-phospho-alpha-D-ribose 1-diphosphate</name>
        <dbReference type="ChEBI" id="CHEBI:58017"/>
    </ligand>
</feature>
<feature type="binding site" evidence="1">
    <location>
        <position position="84"/>
    </location>
    <ligand>
        <name>anthranilate</name>
        <dbReference type="ChEBI" id="CHEBI:16567"/>
        <label>1</label>
    </ligand>
</feature>
<feature type="binding site" evidence="1">
    <location>
        <begin position="87"/>
        <end position="88"/>
    </location>
    <ligand>
        <name>5-phospho-alpha-D-ribose 1-diphosphate</name>
        <dbReference type="ChEBI" id="CHEBI:58017"/>
    </ligand>
</feature>
<feature type="binding site" evidence="1">
    <location>
        <position position="92"/>
    </location>
    <ligand>
        <name>5-phospho-alpha-D-ribose 1-diphosphate</name>
        <dbReference type="ChEBI" id="CHEBI:58017"/>
    </ligand>
</feature>
<feature type="binding site" evidence="1">
    <location>
        <begin position="94"/>
        <end position="97"/>
    </location>
    <ligand>
        <name>5-phospho-alpha-D-ribose 1-diphosphate</name>
        <dbReference type="ChEBI" id="CHEBI:58017"/>
    </ligand>
</feature>
<feature type="binding site" evidence="1">
    <location>
        <position position="96"/>
    </location>
    <ligand>
        <name>Mg(2+)</name>
        <dbReference type="ChEBI" id="CHEBI:18420"/>
        <label>1</label>
    </ligand>
</feature>
<feature type="binding site" evidence="1">
    <location>
        <begin position="112"/>
        <end position="120"/>
    </location>
    <ligand>
        <name>5-phospho-alpha-D-ribose 1-diphosphate</name>
        <dbReference type="ChEBI" id="CHEBI:58017"/>
    </ligand>
</feature>
<feature type="binding site" evidence="1">
    <location>
        <position position="115"/>
    </location>
    <ligand>
        <name>anthranilate</name>
        <dbReference type="ChEBI" id="CHEBI:16567"/>
        <label>1</label>
    </ligand>
</feature>
<feature type="binding site" evidence="1">
    <location>
        <position position="124"/>
    </location>
    <ligand>
        <name>5-phospho-alpha-D-ribose 1-diphosphate</name>
        <dbReference type="ChEBI" id="CHEBI:58017"/>
    </ligand>
</feature>
<feature type="binding site" evidence="1">
    <location>
        <position position="170"/>
    </location>
    <ligand>
        <name>anthranilate</name>
        <dbReference type="ChEBI" id="CHEBI:16567"/>
        <label>2</label>
    </ligand>
</feature>
<feature type="binding site" evidence="1">
    <location>
        <position position="229"/>
    </location>
    <ligand>
        <name>Mg(2+)</name>
        <dbReference type="ChEBI" id="CHEBI:18420"/>
        <label>2</label>
    </ligand>
</feature>
<feature type="binding site" evidence="1">
    <location>
        <position position="230"/>
    </location>
    <ligand>
        <name>Mg(2+)</name>
        <dbReference type="ChEBI" id="CHEBI:18420"/>
        <label>1</label>
    </ligand>
</feature>
<feature type="binding site" evidence="1">
    <location>
        <position position="230"/>
    </location>
    <ligand>
        <name>Mg(2+)</name>
        <dbReference type="ChEBI" id="CHEBI:18420"/>
        <label>2</label>
    </ligand>
</feature>
<proteinExistence type="inferred from homology"/>
<sequence length="343" mass="36767">MTITPQEALQRTIEHREIFHDEMLHLMRLIMRGDLSPVMAAAIITGLRVKKETIGEIAAAATVMREFANHVEVQDNSNFVDIVGTGGDGSHTFNISTASMFVTAAAGAKVAKHGNRGVSSKSGSADVLEALGVNIDLQSDQVAASIAETGMGFMFAPNHHPAMKNIAAVRRELGVRTIFNILGPLTNPAGAPNQLMGVFHADLVGIQVRVMQRLGAQHVLVVYGKDGMDEVSLGAATLVGELRDGKVHEYEIHPEDFGLQMVSNRTLKVENADESRTMLLGALDNQPGVAREIVTLNAGTALYAANVAESIADGIQLAREAIASGKARAKVDELVRFTQQFKR</sequence>
<dbReference type="EC" id="2.4.2.18" evidence="1"/>
<dbReference type="EMBL" id="AM747720">
    <property type="protein sequence ID" value="CAR50708.1"/>
    <property type="molecule type" value="Genomic_DNA"/>
</dbReference>
<dbReference type="RefSeq" id="WP_006482067.1">
    <property type="nucleotide sequence ID" value="NC_011000.1"/>
</dbReference>
<dbReference type="SMR" id="B4E7A8"/>
<dbReference type="GeneID" id="56556967"/>
<dbReference type="KEGG" id="bcj:BCAL0397"/>
<dbReference type="eggNOG" id="COG0547">
    <property type="taxonomic scope" value="Bacteria"/>
</dbReference>
<dbReference type="HOGENOM" id="CLU_034315_2_1_4"/>
<dbReference type="BioCyc" id="BCEN216591:G1G1V-450-MONOMER"/>
<dbReference type="UniPathway" id="UPA00035">
    <property type="reaction ID" value="UER00041"/>
</dbReference>
<dbReference type="Proteomes" id="UP000001035">
    <property type="component" value="Chromosome 1"/>
</dbReference>
<dbReference type="GO" id="GO:0005829">
    <property type="term" value="C:cytosol"/>
    <property type="evidence" value="ECO:0007669"/>
    <property type="project" value="TreeGrafter"/>
</dbReference>
<dbReference type="GO" id="GO:0004048">
    <property type="term" value="F:anthranilate phosphoribosyltransferase activity"/>
    <property type="evidence" value="ECO:0007669"/>
    <property type="project" value="UniProtKB-UniRule"/>
</dbReference>
<dbReference type="GO" id="GO:0000287">
    <property type="term" value="F:magnesium ion binding"/>
    <property type="evidence" value="ECO:0007669"/>
    <property type="project" value="UniProtKB-UniRule"/>
</dbReference>
<dbReference type="GO" id="GO:0000162">
    <property type="term" value="P:L-tryptophan biosynthetic process"/>
    <property type="evidence" value="ECO:0007669"/>
    <property type="project" value="UniProtKB-UniRule"/>
</dbReference>
<dbReference type="FunFam" id="1.20.970.10:FF:000006">
    <property type="entry name" value="Anthranilate phosphoribosyltransferase"/>
    <property type="match status" value="1"/>
</dbReference>
<dbReference type="FunFam" id="3.40.1030.10:FF:000002">
    <property type="entry name" value="Anthranilate phosphoribosyltransferase"/>
    <property type="match status" value="1"/>
</dbReference>
<dbReference type="Gene3D" id="3.40.1030.10">
    <property type="entry name" value="Nucleoside phosphorylase/phosphoribosyltransferase catalytic domain"/>
    <property type="match status" value="1"/>
</dbReference>
<dbReference type="Gene3D" id="1.20.970.10">
    <property type="entry name" value="Transferase, Pyrimidine Nucleoside Phosphorylase, Chain C"/>
    <property type="match status" value="1"/>
</dbReference>
<dbReference type="HAMAP" id="MF_00211">
    <property type="entry name" value="TrpD"/>
    <property type="match status" value="1"/>
</dbReference>
<dbReference type="InterPro" id="IPR005940">
    <property type="entry name" value="Anthranilate_Pribosyl_Tfrase"/>
</dbReference>
<dbReference type="InterPro" id="IPR000312">
    <property type="entry name" value="Glycosyl_Trfase_fam3"/>
</dbReference>
<dbReference type="InterPro" id="IPR017459">
    <property type="entry name" value="Glycosyl_Trfase_fam3_N_dom"/>
</dbReference>
<dbReference type="InterPro" id="IPR036320">
    <property type="entry name" value="Glycosyl_Trfase_fam3_N_dom_sf"/>
</dbReference>
<dbReference type="InterPro" id="IPR035902">
    <property type="entry name" value="Nuc_phospho_transferase"/>
</dbReference>
<dbReference type="NCBIfam" id="TIGR01245">
    <property type="entry name" value="trpD"/>
    <property type="match status" value="1"/>
</dbReference>
<dbReference type="PANTHER" id="PTHR43285">
    <property type="entry name" value="ANTHRANILATE PHOSPHORIBOSYLTRANSFERASE"/>
    <property type="match status" value="1"/>
</dbReference>
<dbReference type="PANTHER" id="PTHR43285:SF2">
    <property type="entry name" value="ANTHRANILATE PHOSPHORIBOSYLTRANSFERASE"/>
    <property type="match status" value="1"/>
</dbReference>
<dbReference type="Pfam" id="PF02885">
    <property type="entry name" value="Glycos_trans_3N"/>
    <property type="match status" value="1"/>
</dbReference>
<dbReference type="Pfam" id="PF00591">
    <property type="entry name" value="Glycos_transf_3"/>
    <property type="match status" value="1"/>
</dbReference>
<dbReference type="SUPFAM" id="SSF52418">
    <property type="entry name" value="Nucleoside phosphorylase/phosphoribosyltransferase catalytic domain"/>
    <property type="match status" value="1"/>
</dbReference>
<dbReference type="SUPFAM" id="SSF47648">
    <property type="entry name" value="Nucleoside phosphorylase/phosphoribosyltransferase N-terminal domain"/>
    <property type="match status" value="1"/>
</dbReference>
<comment type="function">
    <text evidence="1">Catalyzes the transfer of the phosphoribosyl group of 5-phosphorylribose-1-pyrophosphate (PRPP) to anthranilate to yield N-(5'-phosphoribosyl)-anthranilate (PRA).</text>
</comment>
<comment type="catalytic activity">
    <reaction evidence="1">
        <text>N-(5-phospho-beta-D-ribosyl)anthranilate + diphosphate = 5-phospho-alpha-D-ribose 1-diphosphate + anthranilate</text>
        <dbReference type="Rhea" id="RHEA:11768"/>
        <dbReference type="ChEBI" id="CHEBI:16567"/>
        <dbReference type="ChEBI" id="CHEBI:18277"/>
        <dbReference type="ChEBI" id="CHEBI:33019"/>
        <dbReference type="ChEBI" id="CHEBI:58017"/>
        <dbReference type="EC" id="2.4.2.18"/>
    </reaction>
</comment>
<comment type="cofactor">
    <cofactor evidence="1">
        <name>Mg(2+)</name>
        <dbReference type="ChEBI" id="CHEBI:18420"/>
    </cofactor>
    <text evidence="1">Binds 2 magnesium ions per monomer.</text>
</comment>
<comment type="pathway">
    <text evidence="1">Amino-acid biosynthesis; L-tryptophan biosynthesis; L-tryptophan from chorismate: step 2/5.</text>
</comment>
<comment type="subunit">
    <text evidence="1">Homodimer.</text>
</comment>
<comment type="similarity">
    <text evidence="1">Belongs to the anthranilate phosphoribosyltransferase family.</text>
</comment>
<accession>B4E7A8</accession>
<evidence type="ECO:0000255" key="1">
    <source>
        <dbReference type="HAMAP-Rule" id="MF_00211"/>
    </source>
</evidence>
<protein>
    <recommendedName>
        <fullName evidence="1">Anthranilate phosphoribosyltransferase</fullName>
        <ecNumber evidence="1">2.4.2.18</ecNumber>
    </recommendedName>
</protein>
<keyword id="KW-0028">Amino-acid biosynthesis</keyword>
<keyword id="KW-0057">Aromatic amino acid biosynthesis</keyword>
<keyword id="KW-0328">Glycosyltransferase</keyword>
<keyword id="KW-0460">Magnesium</keyword>
<keyword id="KW-0479">Metal-binding</keyword>
<keyword id="KW-0808">Transferase</keyword>
<keyword id="KW-0822">Tryptophan biosynthesis</keyword>
<gene>
    <name evidence="1" type="primary">trpD</name>
    <name type="ordered locus">BceJ2315_03990</name>
    <name type="ORF">BCAL0397</name>
</gene>
<name>TRPD_BURCJ</name>
<organism>
    <name type="scientific">Burkholderia cenocepacia (strain ATCC BAA-245 / DSM 16553 / LMG 16656 / NCTC 13227 / J2315 / CF5610)</name>
    <name type="common">Burkholderia cepacia (strain J2315)</name>
    <dbReference type="NCBI Taxonomy" id="216591"/>
    <lineage>
        <taxon>Bacteria</taxon>
        <taxon>Pseudomonadati</taxon>
        <taxon>Pseudomonadota</taxon>
        <taxon>Betaproteobacteria</taxon>
        <taxon>Burkholderiales</taxon>
        <taxon>Burkholderiaceae</taxon>
        <taxon>Burkholderia</taxon>
        <taxon>Burkholderia cepacia complex</taxon>
    </lineage>
</organism>